<sequence>MFYTETYDVIVIGGGHAGTEAALAPARMGFKTLLLTHNVDTLGQMSCNPAIGGIGKGHLVKEVDAMGGLMAHAADKAGIQFRTLNSSKGPAVRATRAQSDRVLYRQAVRTALENQPNLDIFQQEATDILIEQDRVTGVSTKMGLTFRAKSVILTAGTFLAGKIHIGLENYEGGRAGDSASVNLSHRLRDLGLRVDRLKTGTPPRIDARTINFDILAKQHGDEVLPVFSFMGSVDDHPQQIPCYITHTNEQTHEVIRNNLDRSPMYTGVIEGIGPRYCPSIEDKVMRFADRNSHQIYLEPEGLTSNEVYPNGISTSLPFDVQMGIVNSMKGLENARIVKPGYAIEYDYFDPRDLKPTLETKSISGLFFAGQINGTTGYEEAAAQGLLAGINAGLYVQEKDAWYPRRDQSYTGVLVDDLCTLGTKEPYRVFTSRAEYRLLLREDNADIRLTPIAHELGLIDEARWARFNQKMENIEQERQRLRSIWLHPRSEYLEEANKVLGSPLVREASGEDLLRRPEMTYDILTSLTPYKPAMEDKEAVEQVEIAIKYQGYIEHQQEEIEKQKRHENTAIPANFDYSKVSGLSNEVRAKLEQHRPVSIGQASRISGITPAAISIILVNLKKQGMLKRGE</sequence>
<name>MNMG_HAEIN</name>
<keyword id="KW-0963">Cytoplasm</keyword>
<keyword id="KW-0274">FAD</keyword>
<keyword id="KW-0285">Flavoprotein</keyword>
<keyword id="KW-0520">NAD</keyword>
<keyword id="KW-1185">Reference proteome</keyword>
<keyword id="KW-0819">tRNA processing</keyword>
<organism>
    <name type="scientific">Haemophilus influenzae (strain ATCC 51907 / DSM 11121 / KW20 / Rd)</name>
    <dbReference type="NCBI Taxonomy" id="71421"/>
    <lineage>
        <taxon>Bacteria</taxon>
        <taxon>Pseudomonadati</taxon>
        <taxon>Pseudomonadota</taxon>
        <taxon>Gammaproteobacteria</taxon>
        <taxon>Pasteurellales</taxon>
        <taxon>Pasteurellaceae</taxon>
        <taxon>Haemophilus</taxon>
    </lineage>
</organism>
<feature type="chain" id="PRO_0000117109" description="tRNA uridine 5-carboxymethylaminomethyl modification enzyme MnmG">
    <location>
        <begin position="1"/>
        <end position="629"/>
    </location>
</feature>
<feature type="binding site" evidence="1">
    <location>
        <begin position="13"/>
        <end position="18"/>
    </location>
    <ligand>
        <name>FAD</name>
        <dbReference type="ChEBI" id="CHEBI:57692"/>
    </ligand>
</feature>
<feature type="binding site" evidence="1">
    <location>
        <begin position="273"/>
        <end position="287"/>
    </location>
    <ligand>
        <name>NAD(+)</name>
        <dbReference type="ChEBI" id="CHEBI:57540"/>
    </ligand>
</feature>
<reference key="1">
    <citation type="journal article" date="1995" name="Science">
        <title>Whole-genome random sequencing and assembly of Haemophilus influenzae Rd.</title>
        <authorList>
            <person name="Fleischmann R.D."/>
            <person name="Adams M.D."/>
            <person name="White O."/>
            <person name="Clayton R.A."/>
            <person name="Kirkness E.F."/>
            <person name="Kerlavage A.R."/>
            <person name="Bult C.J."/>
            <person name="Tomb J.-F."/>
            <person name="Dougherty B.A."/>
            <person name="Merrick J.M."/>
            <person name="McKenney K."/>
            <person name="Sutton G.G."/>
            <person name="FitzHugh W."/>
            <person name="Fields C.A."/>
            <person name="Gocayne J.D."/>
            <person name="Scott J.D."/>
            <person name="Shirley R."/>
            <person name="Liu L.-I."/>
            <person name="Glodek A."/>
            <person name="Kelley J.M."/>
            <person name="Weidman J.F."/>
            <person name="Phillips C.A."/>
            <person name="Spriggs T."/>
            <person name="Hedblom E."/>
            <person name="Cotton M.D."/>
            <person name="Utterback T.R."/>
            <person name="Hanna M.C."/>
            <person name="Nguyen D.T."/>
            <person name="Saudek D.M."/>
            <person name="Brandon R.C."/>
            <person name="Fine L.D."/>
            <person name="Fritchman J.L."/>
            <person name="Fuhrmann J.L."/>
            <person name="Geoghagen N.S.M."/>
            <person name="Gnehm C.L."/>
            <person name="McDonald L.A."/>
            <person name="Small K.V."/>
            <person name="Fraser C.M."/>
            <person name="Smith H.O."/>
            <person name="Venter J.C."/>
        </authorList>
    </citation>
    <scope>NUCLEOTIDE SEQUENCE [LARGE SCALE GENOMIC DNA]</scope>
    <source>
        <strain>ATCC 51907 / DSM 11121 / KW20 / Rd</strain>
    </source>
</reference>
<evidence type="ECO:0000255" key="1">
    <source>
        <dbReference type="HAMAP-Rule" id="MF_00129"/>
    </source>
</evidence>
<protein>
    <recommendedName>
        <fullName evidence="1">tRNA uridine 5-carboxymethylaminomethyl modification enzyme MnmG</fullName>
    </recommendedName>
    <alternativeName>
        <fullName evidence="1">Glucose-inhibited division protein A</fullName>
    </alternativeName>
</protein>
<proteinExistence type="inferred from homology"/>
<gene>
    <name evidence="1" type="primary">mnmG</name>
    <name evidence="1" type="synonym">gidA</name>
    <name type="ordered locus">HI_0582</name>
</gene>
<dbReference type="EMBL" id="L42023">
    <property type="protein sequence ID" value="AAC22240.1"/>
    <property type="molecule type" value="Genomic_DNA"/>
</dbReference>
<dbReference type="PIR" id="I64078">
    <property type="entry name" value="I64078"/>
</dbReference>
<dbReference type="RefSeq" id="NP_438740.1">
    <property type="nucleotide sequence ID" value="NC_000907.1"/>
</dbReference>
<dbReference type="SMR" id="P44763"/>
<dbReference type="STRING" id="71421.HI_0582"/>
<dbReference type="EnsemblBacteria" id="AAC22240">
    <property type="protein sequence ID" value="AAC22240"/>
    <property type="gene ID" value="HI_0582"/>
</dbReference>
<dbReference type="KEGG" id="hin:HI_0582"/>
<dbReference type="PATRIC" id="fig|71421.8.peg.603"/>
<dbReference type="eggNOG" id="COG0445">
    <property type="taxonomic scope" value="Bacteria"/>
</dbReference>
<dbReference type="HOGENOM" id="CLU_007831_2_2_6"/>
<dbReference type="OrthoDB" id="9815560at2"/>
<dbReference type="PhylomeDB" id="P44763"/>
<dbReference type="BioCyc" id="HINF71421:G1GJ1-595-MONOMER"/>
<dbReference type="Proteomes" id="UP000000579">
    <property type="component" value="Chromosome"/>
</dbReference>
<dbReference type="GO" id="GO:0005829">
    <property type="term" value="C:cytosol"/>
    <property type="evidence" value="ECO:0000318"/>
    <property type="project" value="GO_Central"/>
</dbReference>
<dbReference type="GO" id="GO:0050660">
    <property type="term" value="F:flavin adenine dinucleotide binding"/>
    <property type="evidence" value="ECO:0000318"/>
    <property type="project" value="GO_Central"/>
</dbReference>
<dbReference type="GO" id="GO:0030488">
    <property type="term" value="P:tRNA methylation"/>
    <property type="evidence" value="ECO:0000318"/>
    <property type="project" value="GO_Central"/>
</dbReference>
<dbReference type="GO" id="GO:0002098">
    <property type="term" value="P:tRNA wobble uridine modification"/>
    <property type="evidence" value="ECO:0000318"/>
    <property type="project" value="GO_Central"/>
</dbReference>
<dbReference type="FunFam" id="1.10.10.1800:FF:000001">
    <property type="entry name" value="tRNA uridine 5-carboxymethylaminomethyl modification enzyme MnmG"/>
    <property type="match status" value="1"/>
</dbReference>
<dbReference type="FunFam" id="1.10.150.570:FF:000001">
    <property type="entry name" value="tRNA uridine 5-carboxymethylaminomethyl modification enzyme MnmG"/>
    <property type="match status" value="1"/>
</dbReference>
<dbReference type="FunFam" id="3.50.50.60:FF:000002">
    <property type="entry name" value="tRNA uridine 5-carboxymethylaminomethyl modification enzyme MnmG"/>
    <property type="match status" value="1"/>
</dbReference>
<dbReference type="FunFam" id="3.50.50.60:FF:000010">
    <property type="entry name" value="tRNA uridine 5-carboxymethylaminomethyl modification enzyme MnmG"/>
    <property type="match status" value="1"/>
</dbReference>
<dbReference type="Gene3D" id="3.50.50.60">
    <property type="entry name" value="FAD/NAD(P)-binding domain"/>
    <property type="match status" value="2"/>
</dbReference>
<dbReference type="Gene3D" id="1.10.150.570">
    <property type="entry name" value="GidA associated domain, C-terminal subdomain"/>
    <property type="match status" value="1"/>
</dbReference>
<dbReference type="Gene3D" id="1.10.10.1800">
    <property type="entry name" value="tRNA uridine 5-carboxymethylaminomethyl modification enzyme MnmG/GidA"/>
    <property type="match status" value="1"/>
</dbReference>
<dbReference type="HAMAP" id="MF_00129">
    <property type="entry name" value="MnmG_GidA"/>
    <property type="match status" value="1"/>
</dbReference>
<dbReference type="InterPro" id="IPR036188">
    <property type="entry name" value="FAD/NAD-bd_sf"/>
</dbReference>
<dbReference type="InterPro" id="IPR049312">
    <property type="entry name" value="GIDA_C_N"/>
</dbReference>
<dbReference type="InterPro" id="IPR004416">
    <property type="entry name" value="MnmG"/>
</dbReference>
<dbReference type="InterPro" id="IPR002218">
    <property type="entry name" value="MnmG-rel"/>
</dbReference>
<dbReference type="InterPro" id="IPR020595">
    <property type="entry name" value="MnmG-rel_CS"/>
</dbReference>
<dbReference type="InterPro" id="IPR026904">
    <property type="entry name" value="MnmG_C"/>
</dbReference>
<dbReference type="InterPro" id="IPR047001">
    <property type="entry name" value="MnmG_C_subdom"/>
</dbReference>
<dbReference type="InterPro" id="IPR044920">
    <property type="entry name" value="MnmG_C_subdom_sf"/>
</dbReference>
<dbReference type="InterPro" id="IPR040131">
    <property type="entry name" value="MnmG_N"/>
</dbReference>
<dbReference type="NCBIfam" id="TIGR00136">
    <property type="entry name" value="mnmG_gidA"/>
    <property type="match status" value="1"/>
</dbReference>
<dbReference type="PANTHER" id="PTHR11806">
    <property type="entry name" value="GLUCOSE INHIBITED DIVISION PROTEIN A"/>
    <property type="match status" value="1"/>
</dbReference>
<dbReference type="PANTHER" id="PTHR11806:SF0">
    <property type="entry name" value="PROTEIN MTO1 HOMOLOG, MITOCHONDRIAL"/>
    <property type="match status" value="1"/>
</dbReference>
<dbReference type="Pfam" id="PF01134">
    <property type="entry name" value="GIDA"/>
    <property type="match status" value="1"/>
</dbReference>
<dbReference type="Pfam" id="PF21680">
    <property type="entry name" value="GIDA_C_1st"/>
    <property type="match status" value="1"/>
</dbReference>
<dbReference type="Pfam" id="PF13932">
    <property type="entry name" value="SAM_GIDA_C"/>
    <property type="match status" value="1"/>
</dbReference>
<dbReference type="PRINTS" id="PR00411">
    <property type="entry name" value="PNDRDTASEI"/>
</dbReference>
<dbReference type="SMART" id="SM01228">
    <property type="entry name" value="GIDA_assoc_3"/>
    <property type="match status" value="1"/>
</dbReference>
<dbReference type="SUPFAM" id="SSF51905">
    <property type="entry name" value="FAD/NAD(P)-binding domain"/>
    <property type="match status" value="1"/>
</dbReference>
<dbReference type="PROSITE" id="PS01280">
    <property type="entry name" value="GIDA_1"/>
    <property type="match status" value="1"/>
</dbReference>
<dbReference type="PROSITE" id="PS01281">
    <property type="entry name" value="GIDA_2"/>
    <property type="match status" value="1"/>
</dbReference>
<comment type="function">
    <text evidence="1">NAD-binding protein involved in the addition of a carboxymethylaminomethyl (cmnm) group at the wobble position (U34) of certain tRNAs, forming tRNA-cmnm(5)s(2)U34.</text>
</comment>
<comment type="cofactor">
    <cofactor evidence="1">
        <name>FAD</name>
        <dbReference type="ChEBI" id="CHEBI:57692"/>
    </cofactor>
</comment>
<comment type="subunit">
    <text evidence="1">Homodimer. Heterotetramer of two MnmE and two MnmG subunits.</text>
</comment>
<comment type="subcellular location">
    <subcellularLocation>
        <location evidence="1">Cytoplasm</location>
    </subcellularLocation>
</comment>
<comment type="similarity">
    <text evidence="1">Belongs to the MnmG family.</text>
</comment>
<accession>P44763</accession>